<evidence type="ECO:0000255" key="1">
    <source>
        <dbReference type="HAMAP-Rule" id="MF_01395"/>
    </source>
</evidence>
<evidence type="ECO:0000255" key="2">
    <source>
        <dbReference type="PROSITE-ProRule" id="PRU01136"/>
    </source>
</evidence>
<name>ACCD_PROM1</name>
<comment type="function">
    <text evidence="1">Component of the acetyl coenzyme A carboxylase (ACC) complex. Biotin carboxylase (BC) catalyzes the carboxylation of biotin on its carrier protein (BCCP) and then the CO(2) group is transferred by the transcarboxylase to acetyl-CoA to form malonyl-CoA.</text>
</comment>
<comment type="catalytic activity">
    <reaction evidence="1">
        <text>N(6)-carboxybiotinyl-L-lysyl-[protein] + acetyl-CoA = N(6)-biotinyl-L-lysyl-[protein] + malonyl-CoA</text>
        <dbReference type="Rhea" id="RHEA:54728"/>
        <dbReference type="Rhea" id="RHEA-COMP:10505"/>
        <dbReference type="Rhea" id="RHEA-COMP:10506"/>
        <dbReference type="ChEBI" id="CHEBI:57288"/>
        <dbReference type="ChEBI" id="CHEBI:57384"/>
        <dbReference type="ChEBI" id="CHEBI:83144"/>
        <dbReference type="ChEBI" id="CHEBI:83145"/>
        <dbReference type="EC" id="2.1.3.15"/>
    </reaction>
</comment>
<comment type="cofactor">
    <cofactor evidence="1">
        <name>Zn(2+)</name>
        <dbReference type="ChEBI" id="CHEBI:29105"/>
    </cofactor>
    <text evidence="1">Binds 1 zinc ion per subunit.</text>
</comment>
<comment type="pathway">
    <text evidence="1">Lipid metabolism; malonyl-CoA biosynthesis; malonyl-CoA from acetyl-CoA: step 1/1.</text>
</comment>
<comment type="subunit">
    <text evidence="1">Acetyl-CoA carboxylase is a heterohexamer composed of biotin carboxyl carrier protein (AccB), biotin carboxylase (AccC) and two subunits each of ACCase subunit alpha (AccA) and ACCase subunit beta (AccD).</text>
</comment>
<comment type="subcellular location">
    <subcellularLocation>
        <location evidence="1">Cytoplasm</location>
    </subcellularLocation>
</comment>
<comment type="similarity">
    <text evidence="1">Belongs to the AccD/PCCB family.</text>
</comment>
<accession>A2C1M1</accession>
<sequence>MSLFDWFADRRKGQFVGKVTQESEESDGLWEKCPECGQVVYRKDLIDNCSVCSNCGHHNRIDSKERIRIISDPNTFKSINNNLTPVDPLGFKDRRAYADRLRESQASTGLKDGVLTGTCEVNSIPMALAVMDFRFMGGSMGSVVGEKITRLIEHSTKEKLPLLIVCASGGARMQEGMLSLMQMAKISGALERHRDAQLLYMPLLTHPTTGGVTASFAMLGDLILAEPKALIGFAGRRVIEQTLREKLPDNFQTAEYLQDHGFVDTIVPRTELKETLAKILRLHKTQEVKLQTNA</sequence>
<keyword id="KW-0067">ATP-binding</keyword>
<keyword id="KW-0963">Cytoplasm</keyword>
<keyword id="KW-0275">Fatty acid biosynthesis</keyword>
<keyword id="KW-0276">Fatty acid metabolism</keyword>
<keyword id="KW-0444">Lipid biosynthesis</keyword>
<keyword id="KW-0443">Lipid metabolism</keyword>
<keyword id="KW-0479">Metal-binding</keyword>
<keyword id="KW-0547">Nucleotide-binding</keyword>
<keyword id="KW-0808">Transferase</keyword>
<keyword id="KW-0862">Zinc</keyword>
<keyword id="KW-0863">Zinc-finger</keyword>
<organism>
    <name type="scientific">Prochlorococcus marinus (strain NATL1A)</name>
    <dbReference type="NCBI Taxonomy" id="167555"/>
    <lineage>
        <taxon>Bacteria</taxon>
        <taxon>Bacillati</taxon>
        <taxon>Cyanobacteriota</taxon>
        <taxon>Cyanophyceae</taxon>
        <taxon>Synechococcales</taxon>
        <taxon>Prochlorococcaceae</taxon>
        <taxon>Prochlorococcus</taxon>
    </lineage>
</organism>
<reference key="1">
    <citation type="journal article" date="2007" name="PLoS Genet.">
        <title>Patterns and implications of gene gain and loss in the evolution of Prochlorococcus.</title>
        <authorList>
            <person name="Kettler G.C."/>
            <person name="Martiny A.C."/>
            <person name="Huang K."/>
            <person name="Zucker J."/>
            <person name="Coleman M.L."/>
            <person name="Rodrigue S."/>
            <person name="Chen F."/>
            <person name="Lapidus A."/>
            <person name="Ferriera S."/>
            <person name="Johnson J."/>
            <person name="Steglich C."/>
            <person name="Church G.M."/>
            <person name="Richardson P."/>
            <person name="Chisholm S.W."/>
        </authorList>
    </citation>
    <scope>NUCLEOTIDE SEQUENCE [LARGE SCALE GENOMIC DNA]</scope>
    <source>
        <strain>NATL1A</strain>
    </source>
</reference>
<dbReference type="EC" id="2.1.3.15" evidence="1"/>
<dbReference type="EMBL" id="CP000553">
    <property type="protein sequence ID" value="ABM75381.1"/>
    <property type="molecule type" value="Genomic_DNA"/>
</dbReference>
<dbReference type="RefSeq" id="WP_011823527.1">
    <property type="nucleotide sequence ID" value="NC_008819.1"/>
</dbReference>
<dbReference type="SMR" id="A2C1M1"/>
<dbReference type="KEGG" id="pme:NATL1_08231"/>
<dbReference type="eggNOG" id="COG0777">
    <property type="taxonomic scope" value="Bacteria"/>
</dbReference>
<dbReference type="HOGENOM" id="CLU_015486_1_1_3"/>
<dbReference type="UniPathway" id="UPA00655">
    <property type="reaction ID" value="UER00711"/>
</dbReference>
<dbReference type="Proteomes" id="UP000002592">
    <property type="component" value="Chromosome"/>
</dbReference>
<dbReference type="GO" id="GO:0009317">
    <property type="term" value="C:acetyl-CoA carboxylase complex"/>
    <property type="evidence" value="ECO:0007669"/>
    <property type="project" value="InterPro"/>
</dbReference>
<dbReference type="GO" id="GO:0003989">
    <property type="term" value="F:acetyl-CoA carboxylase activity"/>
    <property type="evidence" value="ECO:0007669"/>
    <property type="project" value="InterPro"/>
</dbReference>
<dbReference type="GO" id="GO:0005524">
    <property type="term" value="F:ATP binding"/>
    <property type="evidence" value="ECO:0007669"/>
    <property type="project" value="UniProtKB-KW"/>
</dbReference>
<dbReference type="GO" id="GO:0016743">
    <property type="term" value="F:carboxyl- or carbamoyltransferase activity"/>
    <property type="evidence" value="ECO:0007669"/>
    <property type="project" value="UniProtKB-UniRule"/>
</dbReference>
<dbReference type="GO" id="GO:0008270">
    <property type="term" value="F:zinc ion binding"/>
    <property type="evidence" value="ECO:0007669"/>
    <property type="project" value="UniProtKB-UniRule"/>
</dbReference>
<dbReference type="GO" id="GO:0006633">
    <property type="term" value="P:fatty acid biosynthetic process"/>
    <property type="evidence" value="ECO:0007669"/>
    <property type="project" value="UniProtKB-KW"/>
</dbReference>
<dbReference type="GO" id="GO:2001295">
    <property type="term" value="P:malonyl-CoA biosynthetic process"/>
    <property type="evidence" value="ECO:0007669"/>
    <property type="project" value="UniProtKB-UniRule"/>
</dbReference>
<dbReference type="Gene3D" id="3.90.226.10">
    <property type="entry name" value="2-enoyl-CoA Hydratase, Chain A, domain 1"/>
    <property type="match status" value="1"/>
</dbReference>
<dbReference type="HAMAP" id="MF_01395">
    <property type="entry name" value="AcetylCoA_CT_beta"/>
    <property type="match status" value="1"/>
</dbReference>
<dbReference type="InterPro" id="IPR034733">
    <property type="entry name" value="AcCoA_carboxyl_beta"/>
</dbReference>
<dbReference type="InterPro" id="IPR000438">
    <property type="entry name" value="Acetyl_CoA_COase_Trfase_b_su"/>
</dbReference>
<dbReference type="InterPro" id="IPR029045">
    <property type="entry name" value="ClpP/crotonase-like_dom_sf"/>
</dbReference>
<dbReference type="InterPro" id="IPR011762">
    <property type="entry name" value="COA_CT_N"/>
</dbReference>
<dbReference type="InterPro" id="IPR041010">
    <property type="entry name" value="Znf-ACC"/>
</dbReference>
<dbReference type="NCBIfam" id="TIGR00515">
    <property type="entry name" value="accD"/>
    <property type="match status" value="1"/>
</dbReference>
<dbReference type="PANTHER" id="PTHR42995">
    <property type="entry name" value="ACETYL-COENZYME A CARBOXYLASE CARBOXYL TRANSFERASE SUBUNIT BETA, CHLOROPLASTIC"/>
    <property type="match status" value="1"/>
</dbReference>
<dbReference type="PANTHER" id="PTHR42995:SF5">
    <property type="entry name" value="ACETYL-COENZYME A CARBOXYLASE CARBOXYL TRANSFERASE SUBUNIT BETA, CHLOROPLASTIC"/>
    <property type="match status" value="1"/>
</dbReference>
<dbReference type="Pfam" id="PF01039">
    <property type="entry name" value="Carboxyl_trans"/>
    <property type="match status" value="1"/>
</dbReference>
<dbReference type="Pfam" id="PF17848">
    <property type="entry name" value="Zn_ribbon_ACC"/>
    <property type="match status" value="1"/>
</dbReference>
<dbReference type="PRINTS" id="PR01070">
    <property type="entry name" value="ACCCTRFRASEB"/>
</dbReference>
<dbReference type="SUPFAM" id="SSF52096">
    <property type="entry name" value="ClpP/crotonase"/>
    <property type="match status" value="1"/>
</dbReference>
<dbReference type="PROSITE" id="PS50980">
    <property type="entry name" value="COA_CT_NTER"/>
    <property type="match status" value="1"/>
</dbReference>
<feature type="chain" id="PRO_0000359026" description="Acetyl-coenzyme A carboxylase carboxyl transferase subunit beta">
    <location>
        <begin position="1"/>
        <end position="294"/>
    </location>
</feature>
<feature type="domain" description="CoA carboxyltransferase N-terminal" evidence="2">
    <location>
        <begin position="29"/>
        <end position="294"/>
    </location>
</feature>
<feature type="zinc finger region" description="C4-type" evidence="1">
    <location>
        <begin position="33"/>
        <end position="55"/>
    </location>
</feature>
<feature type="binding site" evidence="1">
    <location>
        <position position="33"/>
    </location>
    <ligand>
        <name>Zn(2+)</name>
        <dbReference type="ChEBI" id="CHEBI:29105"/>
    </ligand>
</feature>
<feature type="binding site" evidence="1">
    <location>
        <position position="36"/>
    </location>
    <ligand>
        <name>Zn(2+)</name>
        <dbReference type="ChEBI" id="CHEBI:29105"/>
    </ligand>
</feature>
<feature type="binding site" evidence="1">
    <location>
        <position position="52"/>
    </location>
    <ligand>
        <name>Zn(2+)</name>
        <dbReference type="ChEBI" id="CHEBI:29105"/>
    </ligand>
</feature>
<feature type="binding site" evidence="1">
    <location>
        <position position="55"/>
    </location>
    <ligand>
        <name>Zn(2+)</name>
        <dbReference type="ChEBI" id="CHEBI:29105"/>
    </ligand>
</feature>
<protein>
    <recommendedName>
        <fullName evidence="1">Acetyl-coenzyme A carboxylase carboxyl transferase subunit beta</fullName>
        <shortName evidence="1">ACCase subunit beta</shortName>
        <shortName evidence="1">Acetyl-CoA carboxylase carboxyltransferase subunit beta</shortName>
        <ecNumber evidence="1">2.1.3.15</ecNumber>
    </recommendedName>
</protein>
<proteinExistence type="inferred from homology"/>
<gene>
    <name evidence="1" type="primary">accD</name>
    <name type="ordered locus">NATL1_08231</name>
</gene>